<proteinExistence type="evidence at protein level"/>
<accession>F8J2B3</accession>
<reference key="1">
    <citation type="journal article" date="2011" name="J. Proteome Res.">
        <title>Identification of novel proteins from the venom of a cryptic snake Drysdalia coronoides by a combined transcriptomics and proteomics approach.</title>
        <authorList>
            <person name="Chatrath S.T."/>
            <person name="Chapeaurouge A."/>
            <person name="Lin Q."/>
            <person name="Lim T.K."/>
            <person name="Dunstan N."/>
            <person name="Mirtschin P."/>
            <person name="Kumar P.P."/>
            <person name="Kini R.M."/>
        </authorList>
    </citation>
    <scope>NUCLEOTIDE SEQUENCE [MRNA]</scope>
    <scope>IDENTIFICATION BY MASS SPECTROMETRY</scope>
    <scope>SUBCELLULAR LOCATION</scope>
    <source>
        <tissue>Venom</tissue>
        <tissue>Venom gland</tissue>
    </source>
</reference>
<protein>
    <recommendedName>
        <fullName>Long neurotoxin 13</fullName>
        <shortName>LNTX-13</shortName>
    </recommendedName>
</protein>
<feature type="signal peptide" evidence="1">
    <location>
        <begin position="1"/>
        <end position="21"/>
    </location>
</feature>
<feature type="chain" id="PRO_0000425527" description="Long neurotoxin 13">
    <location>
        <begin position="22"/>
        <end position="108"/>
    </location>
</feature>
<feature type="disulfide bond" evidence="1">
    <location>
        <begin position="24"/>
        <end position="42"/>
    </location>
</feature>
<feature type="disulfide bond" evidence="1">
    <location>
        <begin position="35"/>
        <end position="63"/>
    </location>
</feature>
<feature type="disulfide bond" evidence="1">
    <location>
        <begin position="48"/>
        <end position="52"/>
    </location>
</feature>
<feature type="disulfide bond" evidence="1">
    <location>
        <begin position="67"/>
        <end position="78"/>
    </location>
</feature>
<feature type="disulfide bond" evidence="1">
    <location>
        <begin position="79"/>
        <end position="84"/>
    </location>
</feature>
<dbReference type="EMBL" id="FJ481928">
    <property type="protein sequence ID" value="ACQ90251.1"/>
    <property type="molecule type" value="mRNA"/>
</dbReference>
<dbReference type="SMR" id="F8J2B3"/>
<dbReference type="GO" id="GO:0005576">
    <property type="term" value="C:extracellular region"/>
    <property type="evidence" value="ECO:0007669"/>
    <property type="project" value="UniProtKB-SubCell"/>
</dbReference>
<dbReference type="GO" id="GO:0030550">
    <property type="term" value="F:acetylcholine receptor inhibitor activity"/>
    <property type="evidence" value="ECO:0007669"/>
    <property type="project" value="UniProtKB-KW"/>
</dbReference>
<dbReference type="GO" id="GO:0099106">
    <property type="term" value="F:ion channel regulator activity"/>
    <property type="evidence" value="ECO:0007669"/>
    <property type="project" value="UniProtKB-KW"/>
</dbReference>
<dbReference type="GO" id="GO:0090729">
    <property type="term" value="F:toxin activity"/>
    <property type="evidence" value="ECO:0007669"/>
    <property type="project" value="UniProtKB-KW"/>
</dbReference>
<dbReference type="CDD" id="cd00206">
    <property type="entry name" value="TFP_snake_toxin"/>
    <property type="match status" value="1"/>
</dbReference>
<dbReference type="Gene3D" id="2.10.60.10">
    <property type="entry name" value="CD59"/>
    <property type="match status" value="1"/>
</dbReference>
<dbReference type="InterPro" id="IPR003571">
    <property type="entry name" value="Snake_3FTx"/>
</dbReference>
<dbReference type="InterPro" id="IPR045860">
    <property type="entry name" value="Snake_toxin-like_sf"/>
</dbReference>
<dbReference type="InterPro" id="IPR018354">
    <property type="entry name" value="Snake_toxin_con_site"/>
</dbReference>
<dbReference type="InterPro" id="IPR054131">
    <property type="entry name" value="Toxin_cobra-type"/>
</dbReference>
<dbReference type="Pfam" id="PF21947">
    <property type="entry name" value="Toxin_cobra-type"/>
    <property type="match status" value="1"/>
</dbReference>
<dbReference type="SUPFAM" id="SSF57302">
    <property type="entry name" value="Snake toxin-like"/>
    <property type="match status" value="1"/>
</dbReference>
<dbReference type="PROSITE" id="PS00272">
    <property type="entry name" value="SNAKE_TOXIN"/>
    <property type="match status" value="1"/>
</dbReference>
<keyword id="KW-0008">Acetylcholine receptor inhibiting toxin</keyword>
<keyword id="KW-1015">Disulfide bond</keyword>
<keyword id="KW-0872">Ion channel impairing toxin</keyword>
<keyword id="KW-0528">Neurotoxin</keyword>
<keyword id="KW-0629">Postsynaptic neurotoxin</keyword>
<keyword id="KW-0964">Secreted</keyword>
<keyword id="KW-0732">Signal</keyword>
<keyword id="KW-0800">Toxin</keyword>
<name>3L213_DRYCN</name>
<comment type="function">
    <text evidence="2">Binds with high affinity to muscular (alpha-1/CHRNA1) and neuronal (alpha-7/CHRNA7) nicotinic acetylcholine receptor (nAChR) and inhibits acetylcholine from binding to the receptor, thereby impairing neuromuscular and neuronal transmission.</text>
</comment>
<comment type="subcellular location">
    <subcellularLocation>
        <location evidence="3">Secreted</location>
    </subcellularLocation>
</comment>
<comment type="tissue specificity">
    <text evidence="4">Expressed by the venom gland.</text>
</comment>
<comment type="similarity">
    <text evidence="4">Belongs to the three-finger toxin family. Long-chain subfamily. Type II alpha-neurotoxin sub-subfamily.</text>
</comment>
<organism>
    <name type="scientific">Drysdalia coronoides</name>
    <name type="common">White-lipped snake</name>
    <name type="synonym">Hoplocephalus coronoides</name>
    <dbReference type="NCBI Taxonomy" id="66186"/>
    <lineage>
        <taxon>Eukaryota</taxon>
        <taxon>Metazoa</taxon>
        <taxon>Chordata</taxon>
        <taxon>Craniata</taxon>
        <taxon>Vertebrata</taxon>
        <taxon>Euteleostomi</taxon>
        <taxon>Lepidosauria</taxon>
        <taxon>Squamata</taxon>
        <taxon>Bifurcata</taxon>
        <taxon>Unidentata</taxon>
        <taxon>Episquamata</taxon>
        <taxon>Toxicofera</taxon>
        <taxon>Serpentes</taxon>
        <taxon>Colubroidea</taxon>
        <taxon>Elapidae</taxon>
        <taxon>Notechinae</taxon>
        <taxon>Drysdalia</taxon>
    </lineage>
</organism>
<sequence>MKTLLLTLVVVTIVCLDLAYTRKCYKTHPYKSEPCASGENLCYTKTWCDFRCSQLGKAVELGCAATCPTTKPYEEVTCCSTDDCNRFPNWERPRPRPRGLLSSIMDHP</sequence>
<evidence type="ECO:0000250" key="1"/>
<evidence type="ECO:0000250" key="2">
    <source>
        <dbReference type="UniProtKB" id="P60615"/>
    </source>
</evidence>
<evidence type="ECO:0000269" key="3">
    <source>
    </source>
</evidence>
<evidence type="ECO:0000305" key="4"/>